<dbReference type="EMBL" id="BA000031">
    <property type="protein sequence ID" value="BAC59199.1"/>
    <property type="molecule type" value="Genomic_DNA"/>
</dbReference>
<dbReference type="RefSeq" id="NP_797315.1">
    <property type="nucleotide sequence ID" value="NC_004603.1"/>
</dbReference>
<dbReference type="RefSeq" id="WP_005486366.1">
    <property type="nucleotide sequence ID" value="NC_004603.1"/>
</dbReference>
<dbReference type="GeneID" id="1188434"/>
<dbReference type="KEGG" id="vpa:VP0936"/>
<dbReference type="PATRIC" id="fig|223926.6.peg.887"/>
<dbReference type="eggNOG" id="COG2855">
    <property type="taxonomic scope" value="Bacteria"/>
</dbReference>
<dbReference type="HOGENOM" id="CLU_033541_2_0_6"/>
<dbReference type="Proteomes" id="UP000002493">
    <property type="component" value="Chromosome 1"/>
</dbReference>
<dbReference type="GO" id="GO:0005886">
    <property type="term" value="C:plasma membrane"/>
    <property type="evidence" value="ECO:0007669"/>
    <property type="project" value="UniProtKB-SubCell"/>
</dbReference>
<dbReference type="InterPro" id="IPR018383">
    <property type="entry name" value="UPF0324_pro"/>
</dbReference>
<dbReference type="PANTHER" id="PTHR30106">
    <property type="entry name" value="INNER MEMBRANE PROTEIN YEIH-RELATED"/>
    <property type="match status" value="1"/>
</dbReference>
<dbReference type="PANTHER" id="PTHR30106:SF1">
    <property type="entry name" value="UPF0324 MEMBRANE PROTEIN FN0533"/>
    <property type="match status" value="1"/>
</dbReference>
<dbReference type="Pfam" id="PF03601">
    <property type="entry name" value="Cons_hypoth698"/>
    <property type="match status" value="1"/>
</dbReference>
<protein>
    <recommendedName>
        <fullName>UPF0324 membrane protein VP0936</fullName>
    </recommendedName>
</protein>
<name>Y936_VIBPA</name>
<organism>
    <name type="scientific">Vibrio parahaemolyticus serotype O3:K6 (strain RIMD 2210633)</name>
    <dbReference type="NCBI Taxonomy" id="223926"/>
    <lineage>
        <taxon>Bacteria</taxon>
        <taxon>Pseudomonadati</taxon>
        <taxon>Pseudomonadota</taxon>
        <taxon>Gammaproteobacteria</taxon>
        <taxon>Vibrionales</taxon>
        <taxon>Vibrionaceae</taxon>
        <taxon>Vibrio</taxon>
    </lineage>
</organism>
<keyword id="KW-1003">Cell membrane</keyword>
<keyword id="KW-0472">Membrane</keyword>
<keyword id="KW-0812">Transmembrane</keyword>
<keyword id="KW-1133">Transmembrane helix</keyword>
<proteinExistence type="inferred from homology"/>
<accession>Q87R62</accession>
<reference key="1">
    <citation type="journal article" date="2003" name="Lancet">
        <title>Genome sequence of Vibrio parahaemolyticus: a pathogenic mechanism distinct from that of V. cholerae.</title>
        <authorList>
            <person name="Makino K."/>
            <person name="Oshima K."/>
            <person name="Kurokawa K."/>
            <person name="Yokoyama K."/>
            <person name="Uda T."/>
            <person name="Tagomori K."/>
            <person name="Iijima Y."/>
            <person name="Najima M."/>
            <person name="Nakano M."/>
            <person name="Yamashita A."/>
            <person name="Kubota Y."/>
            <person name="Kimura S."/>
            <person name="Yasunaga T."/>
            <person name="Honda T."/>
            <person name="Shinagawa H."/>
            <person name="Hattori M."/>
            <person name="Iida T."/>
        </authorList>
    </citation>
    <scope>NUCLEOTIDE SEQUENCE [LARGE SCALE GENOMIC DNA]</scope>
    <source>
        <strain>RIMD 2210633</strain>
    </source>
</reference>
<sequence>MNRKYIPFGLALLFCLTPFVSSPIALVIGFLLASFGLVPTELPIASFTKKLLSYSIIGLGFGINFEQALSVTSDGIGLIIATIVGTLVIGSLIAKVIKLETTTAYLISSGTAICGGSAIAAVAPAIRAKDEQIGLALATVFVLNSLALFIFPVIGHALNLDQHTFGTWAAIAIHDTSSVVGAASAYGEEALTTATTLKLARALWIIPVALISAVIFSRGNKENGSKKLVIPYFIFWYCAAIAFSDFFPQLEVVYHGIFTIAKQALVVCLFLIGCSISISKLKSSGPKPLLFGVTLWVLISTTSLSWLVLR</sequence>
<evidence type="ECO:0000255" key="1"/>
<evidence type="ECO:0000305" key="2"/>
<gene>
    <name type="ordered locus">VP0936</name>
</gene>
<comment type="subcellular location">
    <subcellularLocation>
        <location evidence="2">Cell membrane</location>
        <topology evidence="2">Multi-pass membrane protein</topology>
    </subcellularLocation>
</comment>
<comment type="similarity">
    <text evidence="2">Belongs to the UPF0324 family.</text>
</comment>
<feature type="chain" id="PRO_0000157468" description="UPF0324 membrane protein VP0936">
    <location>
        <begin position="1"/>
        <end position="310"/>
    </location>
</feature>
<feature type="transmembrane region" description="Helical" evidence="1">
    <location>
        <begin position="7"/>
        <end position="29"/>
    </location>
</feature>
<feature type="transmembrane region" description="Helical" evidence="1">
    <location>
        <begin position="44"/>
        <end position="63"/>
    </location>
</feature>
<feature type="transmembrane region" description="Helical" evidence="1">
    <location>
        <begin position="75"/>
        <end position="94"/>
    </location>
</feature>
<feature type="transmembrane region" description="Helical" evidence="1">
    <location>
        <begin position="104"/>
        <end position="126"/>
    </location>
</feature>
<feature type="transmembrane region" description="Helical" evidence="1">
    <location>
        <begin position="133"/>
        <end position="155"/>
    </location>
</feature>
<feature type="transmembrane region" description="Helical" evidence="1">
    <location>
        <begin position="165"/>
        <end position="187"/>
    </location>
</feature>
<feature type="transmembrane region" description="Helical" evidence="1">
    <location>
        <begin position="199"/>
        <end position="218"/>
    </location>
</feature>
<feature type="transmembrane region" description="Helical" evidence="1">
    <location>
        <begin position="228"/>
        <end position="250"/>
    </location>
</feature>
<feature type="transmembrane region" description="Helical" evidence="1">
    <location>
        <begin position="257"/>
        <end position="279"/>
    </location>
</feature>
<feature type="transmembrane region" description="Helical" evidence="1">
    <location>
        <begin position="289"/>
        <end position="308"/>
    </location>
</feature>